<evidence type="ECO:0000255" key="1">
    <source>
        <dbReference type="HAMAP-Rule" id="MF_00096"/>
    </source>
</evidence>
<proteinExistence type="inferred from homology"/>
<gene>
    <name evidence="1" type="primary">mutS</name>
    <name type="ordered locus">Tbd_1159</name>
</gene>
<reference key="1">
    <citation type="journal article" date="2006" name="J. Bacteriol.">
        <title>The genome sequence of the obligately chemolithoautotrophic, facultatively anaerobic bacterium Thiobacillus denitrificans.</title>
        <authorList>
            <person name="Beller H.R."/>
            <person name="Chain P.S."/>
            <person name="Letain T.E."/>
            <person name="Chakicherla A."/>
            <person name="Larimer F.W."/>
            <person name="Richardson P.M."/>
            <person name="Coleman M.A."/>
            <person name="Wood A.P."/>
            <person name="Kelly D.P."/>
        </authorList>
    </citation>
    <scope>NUCLEOTIDE SEQUENCE [LARGE SCALE GENOMIC DNA]</scope>
    <source>
        <strain>ATCC 25259 / T1</strain>
    </source>
</reference>
<dbReference type="EMBL" id="CP000116">
    <property type="protein sequence ID" value="AAZ97112.1"/>
    <property type="molecule type" value="Genomic_DNA"/>
</dbReference>
<dbReference type="RefSeq" id="WP_011311671.1">
    <property type="nucleotide sequence ID" value="NC_007404.1"/>
</dbReference>
<dbReference type="SMR" id="Q3SJP0"/>
<dbReference type="STRING" id="292415.Tbd_1159"/>
<dbReference type="KEGG" id="tbd:Tbd_1159"/>
<dbReference type="eggNOG" id="COG0249">
    <property type="taxonomic scope" value="Bacteria"/>
</dbReference>
<dbReference type="HOGENOM" id="CLU_002472_4_0_4"/>
<dbReference type="OrthoDB" id="9802448at2"/>
<dbReference type="Proteomes" id="UP000008291">
    <property type="component" value="Chromosome"/>
</dbReference>
<dbReference type="GO" id="GO:0005829">
    <property type="term" value="C:cytosol"/>
    <property type="evidence" value="ECO:0007669"/>
    <property type="project" value="TreeGrafter"/>
</dbReference>
<dbReference type="GO" id="GO:0005524">
    <property type="term" value="F:ATP binding"/>
    <property type="evidence" value="ECO:0007669"/>
    <property type="project" value="UniProtKB-UniRule"/>
</dbReference>
<dbReference type="GO" id="GO:0140664">
    <property type="term" value="F:ATP-dependent DNA damage sensor activity"/>
    <property type="evidence" value="ECO:0007669"/>
    <property type="project" value="InterPro"/>
</dbReference>
<dbReference type="GO" id="GO:0003684">
    <property type="term" value="F:damaged DNA binding"/>
    <property type="evidence" value="ECO:0007669"/>
    <property type="project" value="UniProtKB-UniRule"/>
</dbReference>
<dbReference type="GO" id="GO:0030983">
    <property type="term" value="F:mismatched DNA binding"/>
    <property type="evidence" value="ECO:0007669"/>
    <property type="project" value="InterPro"/>
</dbReference>
<dbReference type="GO" id="GO:0006298">
    <property type="term" value="P:mismatch repair"/>
    <property type="evidence" value="ECO:0007669"/>
    <property type="project" value="UniProtKB-UniRule"/>
</dbReference>
<dbReference type="CDD" id="cd03284">
    <property type="entry name" value="ABC_MutS1"/>
    <property type="match status" value="1"/>
</dbReference>
<dbReference type="FunFam" id="1.10.1420.10:FF:000001">
    <property type="entry name" value="DNA mismatch repair protein MutS"/>
    <property type="match status" value="1"/>
</dbReference>
<dbReference type="FunFam" id="3.40.1170.10:FF:000001">
    <property type="entry name" value="DNA mismatch repair protein MutS"/>
    <property type="match status" value="1"/>
</dbReference>
<dbReference type="FunFam" id="3.40.50.300:FF:000870">
    <property type="entry name" value="MutS protein homolog 4"/>
    <property type="match status" value="1"/>
</dbReference>
<dbReference type="Gene3D" id="1.10.1420.10">
    <property type="match status" value="2"/>
</dbReference>
<dbReference type="Gene3D" id="6.10.140.430">
    <property type="match status" value="1"/>
</dbReference>
<dbReference type="Gene3D" id="3.40.1170.10">
    <property type="entry name" value="DNA repair protein MutS, domain I"/>
    <property type="match status" value="1"/>
</dbReference>
<dbReference type="Gene3D" id="3.30.420.110">
    <property type="entry name" value="MutS, connector domain"/>
    <property type="match status" value="1"/>
</dbReference>
<dbReference type="Gene3D" id="3.40.50.300">
    <property type="entry name" value="P-loop containing nucleotide triphosphate hydrolases"/>
    <property type="match status" value="1"/>
</dbReference>
<dbReference type="HAMAP" id="MF_00096">
    <property type="entry name" value="MutS"/>
    <property type="match status" value="1"/>
</dbReference>
<dbReference type="InterPro" id="IPR005748">
    <property type="entry name" value="DNA_mismatch_repair_MutS"/>
</dbReference>
<dbReference type="InterPro" id="IPR007695">
    <property type="entry name" value="DNA_mismatch_repair_MutS-lik_N"/>
</dbReference>
<dbReference type="InterPro" id="IPR017261">
    <property type="entry name" value="DNA_mismatch_repair_MutS/MSH"/>
</dbReference>
<dbReference type="InterPro" id="IPR000432">
    <property type="entry name" value="DNA_mismatch_repair_MutS_C"/>
</dbReference>
<dbReference type="InterPro" id="IPR007861">
    <property type="entry name" value="DNA_mismatch_repair_MutS_clamp"/>
</dbReference>
<dbReference type="InterPro" id="IPR007696">
    <property type="entry name" value="DNA_mismatch_repair_MutS_core"/>
</dbReference>
<dbReference type="InterPro" id="IPR016151">
    <property type="entry name" value="DNA_mismatch_repair_MutS_N"/>
</dbReference>
<dbReference type="InterPro" id="IPR036187">
    <property type="entry name" value="DNA_mismatch_repair_MutS_sf"/>
</dbReference>
<dbReference type="InterPro" id="IPR007860">
    <property type="entry name" value="DNA_mmatch_repair_MutS_con_dom"/>
</dbReference>
<dbReference type="InterPro" id="IPR045076">
    <property type="entry name" value="MutS"/>
</dbReference>
<dbReference type="InterPro" id="IPR036678">
    <property type="entry name" value="MutS_con_dom_sf"/>
</dbReference>
<dbReference type="InterPro" id="IPR027417">
    <property type="entry name" value="P-loop_NTPase"/>
</dbReference>
<dbReference type="NCBIfam" id="TIGR01070">
    <property type="entry name" value="mutS1"/>
    <property type="match status" value="1"/>
</dbReference>
<dbReference type="NCBIfam" id="NF003810">
    <property type="entry name" value="PRK05399.1"/>
    <property type="match status" value="1"/>
</dbReference>
<dbReference type="PANTHER" id="PTHR11361:SF34">
    <property type="entry name" value="DNA MISMATCH REPAIR PROTEIN MSH1, MITOCHONDRIAL"/>
    <property type="match status" value="1"/>
</dbReference>
<dbReference type="PANTHER" id="PTHR11361">
    <property type="entry name" value="DNA MISMATCH REPAIR PROTEIN MUTS FAMILY MEMBER"/>
    <property type="match status" value="1"/>
</dbReference>
<dbReference type="Pfam" id="PF01624">
    <property type="entry name" value="MutS_I"/>
    <property type="match status" value="1"/>
</dbReference>
<dbReference type="Pfam" id="PF05188">
    <property type="entry name" value="MutS_II"/>
    <property type="match status" value="1"/>
</dbReference>
<dbReference type="Pfam" id="PF05192">
    <property type="entry name" value="MutS_III"/>
    <property type="match status" value="1"/>
</dbReference>
<dbReference type="Pfam" id="PF05190">
    <property type="entry name" value="MutS_IV"/>
    <property type="match status" value="1"/>
</dbReference>
<dbReference type="Pfam" id="PF00488">
    <property type="entry name" value="MutS_V"/>
    <property type="match status" value="1"/>
</dbReference>
<dbReference type="PIRSF" id="PIRSF037677">
    <property type="entry name" value="DNA_mis_repair_Msh6"/>
    <property type="match status" value="1"/>
</dbReference>
<dbReference type="SMART" id="SM00534">
    <property type="entry name" value="MUTSac"/>
    <property type="match status" value="1"/>
</dbReference>
<dbReference type="SMART" id="SM00533">
    <property type="entry name" value="MUTSd"/>
    <property type="match status" value="1"/>
</dbReference>
<dbReference type="SUPFAM" id="SSF55271">
    <property type="entry name" value="DNA repair protein MutS, domain I"/>
    <property type="match status" value="1"/>
</dbReference>
<dbReference type="SUPFAM" id="SSF53150">
    <property type="entry name" value="DNA repair protein MutS, domain II"/>
    <property type="match status" value="1"/>
</dbReference>
<dbReference type="SUPFAM" id="SSF48334">
    <property type="entry name" value="DNA repair protein MutS, domain III"/>
    <property type="match status" value="1"/>
</dbReference>
<dbReference type="SUPFAM" id="SSF52540">
    <property type="entry name" value="P-loop containing nucleoside triphosphate hydrolases"/>
    <property type="match status" value="1"/>
</dbReference>
<dbReference type="PROSITE" id="PS00486">
    <property type="entry name" value="DNA_MISMATCH_REPAIR_2"/>
    <property type="match status" value="1"/>
</dbReference>
<sequence length="850" mass="92213">MSIAPAAHTPMMQQYLGIKAQHPDMLLFYRMGDFYELFFEDAEKAARLLNITLTTRGASAGSPIKMAGVPYHSAEQYLARLLKLGESVVIAEQVGDPAASKGPVERRVSRVVTPGTLTDAGLLDETRDALIMAIAVAGDVLGVAWLNLAAGRFQVTELDRTALPALLARVRPAEILAHEHLDLAADCPVRRLDAWQFDADGASKRLARQFGSCDLQGFGVAEMHCAIAAAGALLGYIETTQRTALPHLLSIRAERDSDFVLLDAATRRNLELTETLRGDAAPTLRSVLDTTCSGMGTRLLRHWLHHPLRDRAAVAARRDAIGVLAAAPDSAARLADLLKRCADVERIGGRIALKNARPRDLSGLRDTLALLPELAAALPTDGARLAALRDAVAATPDVHALLVRAIQPEPASVLREGGVIADGYDAELDELRALTRDAGAFLLELETRERARSGIATLKVEYNKVHGFYIEVGRAQAERVPDDYRRRQTLKNVERYLTPELKAFEDKALSAQERALAREKALFEALLDTLIPHVPNLLSIASALAEIDVLASQAERASTLRLCAPEFSDDPCIVIRGGRHPVVEAQVEHFIPNDVVLNRTRQMLLITGPNMGGKSTYMRQVALITLMACCGLWVPAASARIGAIDQIFTRIGASDDLAGGRSTFMVEMTETANILHSATADSLVLLDEIGRGTSTFDGLALAWAVARHLVSATRAFTLFATHYFELTQLAQEYRQLANVHLDAKEHGADLVFLHAVEDGPASQSYGIQVARLAGVPGPVIHAARRRLRELEDAQLQPGPQGDLFAAHLPRDEAPPHPALDQLRELDPDTLTPKAALDMLYALKALTDSEP</sequence>
<accession>Q3SJP0</accession>
<organism>
    <name type="scientific">Thiobacillus denitrificans (strain ATCC 25259 / T1)</name>
    <dbReference type="NCBI Taxonomy" id="292415"/>
    <lineage>
        <taxon>Bacteria</taxon>
        <taxon>Pseudomonadati</taxon>
        <taxon>Pseudomonadota</taxon>
        <taxon>Betaproteobacteria</taxon>
        <taxon>Nitrosomonadales</taxon>
        <taxon>Thiobacillaceae</taxon>
        <taxon>Thiobacillus</taxon>
    </lineage>
</organism>
<keyword id="KW-0067">ATP-binding</keyword>
<keyword id="KW-0227">DNA damage</keyword>
<keyword id="KW-0234">DNA repair</keyword>
<keyword id="KW-0238">DNA-binding</keyword>
<keyword id="KW-0547">Nucleotide-binding</keyword>
<keyword id="KW-1185">Reference proteome</keyword>
<name>MUTS_THIDA</name>
<feature type="chain" id="PRO_0000224415" description="DNA mismatch repair protein MutS">
    <location>
        <begin position="1"/>
        <end position="850"/>
    </location>
</feature>
<feature type="binding site" evidence="1">
    <location>
        <begin position="608"/>
        <end position="615"/>
    </location>
    <ligand>
        <name>ATP</name>
        <dbReference type="ChEBI" id="CHEBI:30616"/>
    </ligand>
</feature>
<protein>
    <recommendedName>
        <fullName evidence="1">DNA mismatch repair protein MutS</fullName>
    </recommendedName>
</protein>
<comment type="function">
    <text evidence="1">This protein is involved in the repair of mismatches in DNA. It is possible that it carries out the mismatch recognition step. This protein has a weak ATPase activity.</text>
</comment>
<comment type="similarity">
    <text evidence="1">Belongs to the DNA mismatch repair MutS family.</text>
</comment>